<name>CPSF7_MOUSE</name>
<organism>
    <name type="scientific">Mus musculus</name>
    <name type="common">Mouse</name>
    <dbReference type="NCBI Taxonomy" id="10090"/>
    <lineage>
        <taxon>Eukaryota</taxon>
        <taxon>Metazoa</taxon>
        <taxon>Chordata</taxon>
        <taxon>Craniata</taxon>
        <taxon>Vertebrata</taxon>
        <taxon>Euteleostomi</taxon>
        <taxon>Mammalia</taxon>
        <taxon>Eutheria</taxon>
        <taxon>Euarchontoglires</taxon>
        <taxon>Glires</taxon>
        <taxon>Rodentia</taxon>
        <taxon>Myomorpha</taxon>
        <taxon>Muroidea</taxon>
        <taxon>Muridae</taxon>
        <taxon>Murinae</taxon>
        <taxon>Mus</taxon>
        <taxon>Mus</taxon>
    </lineage>
</organism>
<dbReference type="EMBL" id="AK053375">
    <property type="protein sequence ID" value="BAC35368.1"/>
    <property type="molecule type" value="mRNA"/>
</dbReference>
<dbReference type="EMBL" id="AK165330">
    <property type="protein sequence ID" value="BAE38138.1"/>
    <property type="molecule type" value="mRNA"/>
</dbReference>
<dbReference type="EMBL" id="AK088603">
    <property type="protein sequence ID" value="BAC40447.1"/>
    <property type="molecule type" value="mRNA"/>
</dbReference>
<dbReference type="EMBL" id="BC038812">
    <property type="protein sequence ID" value="AAH38812.1"/>
    <property type="molecule type" value="mRNA"/>
</dbReference>
<dbReference type="CCDS" id="CCDS29579.1">
    <molecule id="Q8BTV2-1"/>
</dbReference>
<dbReference type="RefSeq" id="NP_001157744.1">
    <molecule id="Q8BTV2-2"/>
    <property type="nucleotide sequence ID" value="NM_001164272.2"/>
</dbReference>
<dbReference type="RefSeq" id="NP_001349379.1">
    <molecule id="Q8BTV2-3"/>
    <property type="nucleotide sequence ID" value="NM_001362450.2"/>
</dbReference>
<dbReference type="RefSeq" id="NP_758506.3">
    <molecule id="Q8BTV2-1"/>
    <property type="nucleotide sequence ID" value="NM_172302.3"/>
</dbReference>
<dbReference type="RefSeq" id="XP_006527179.1">
    <molecule id="Q8BTV2-1"/>
    <property type="nucleotide sequence ID" value="XM_006527116.5"/>
</dbReference>
<dbReference type="RefSeq" id="XP_006527186.1">
    <property type="nucleotide sequence ID" value="XM_006527123.2"/>
</dbReference>
<dbReference type="RefSeq" id="XP_030106814.1">
    <molecule id="Q8BTV2-2"/>
    <property type="nucleotide sequence ID" value="XM_030250954.1"/>
</dbReference>
<dbReference type="RefSeq" id="XP_030106818.1">
    <molecule id="Q8BTV2-3"/>
    <property type="nucleotide sequence ID" value="XM_030250958.1"/>
</dbReference>
<dbReference type="RefSeq" id="XP_036017501.1">
    <molecule id="Q8BTV2-3"/>
    <property type="nucleotide sequence ID" value="XM_036161608.1"/>
</dbReference>
<dbReference type="SMR" id="Q8BTV2"/>
<dbReference type="BioGRID" id="234601">
    <property type="interactions" value="9"/>
</dbReference>
<dbReference type="FunCoup" id="Q8BTV2">
    <property type="interactions" value="5378"/>
</dbReference>
<dbReference type="STRING" id="10090.ENSMUSP00000038958"/>
<dbReference type="GlyGen" id="Q8BTV2">
    <property type="glycosylation" value="2 sites, 2 N-linked glycans (2 sites)"/>
</dbReference>
<dbReference type="iPTMnet" id="Q8BTV2"/>
<dbReference type="PhosphoSitePlus" id="Q8BTV2"/>
<dbReference type="SwissPalm" id="Q8BTV2"/>
<dbReference type="jPOST" id="Q8BTV2"/>
<dbReference type="PaxDb" id="10090-ENSMUSP00000038958"/>
<dbReference type="PeptideAtlas" id="Q8BTV2"/>
<dbReference type="ProteomicsDB" id="283943">
    <molecule id="Q8BTV2-1"/>
</dbReference>
<dbReference type="ProteomicsDB" id="283944">
    <molecule id="Q8BTV2-2"/>
</dbReference>
<dbReference type="ProteomicsDB" id="283945">
    <molecule id="Q8BTV2-3"/>
</dbReference>
<dbReference type="Pumba" id="Q8BTV2"/>
<dbReference type="Antibodypedia" id="14651">
    <property type="antibodies" value="137 antibodies from 24 providers"/>
</dbReference>
<dbReference type="Ensembl" id="ENSMUST00000038379.5">
    <molecule id="Q8BTV2-1"/>
    <property type="protein sequence ID" value="ENSMUSP00000038958.4"/>
    <property type="gene ID" value="ENSMUSG00000034820.5"/>
</dbReference>
<dbReference type="Ensembl" id="ENSMUST00000237321.2">
    <molecule id="Q8BTV2-1"/>
    <property type="protein sequence ID" value="ENSMUSP00000157834.2"/>
    <property type="gene ID" value="ENSMUSG00000034820.5"/>
</dbReference>
<dbReference type="GeneID" id="269061"/>
<dbReference type="KEGG" id="mmu:269061"/>
<dbReference type="UCSC" id="uc008gpw.2">
    <molecule id="Q8BTV2-1"/>
    <property type="organism name" value="mouse"/>
</dbReference>
<dbReference type="UCSC" id="uc008gqa.2">
    <molecule id="Q8BTV2-2"/>
    <property type="organism name" value="mouse"/>
</dbReference>
<dbReference type="AGR" id="MGI:1917826"/>
<dbReference type="CTD" id="79869"/>
<dbReference type="MGI" id="MGI:1917826">
    <property type="gene designation" value="Cpsf7"/>
</dbReference>
<dbReference type="VEuPathDB" id="HostDB:ENSMUSG00000034820"/>
<dbReference type="eggNOG" id="KOG4849">
    <property type="taxonomic scope" value="Eukaryota"/>
</dbReference>
<dbReference type="GeneTree" id="ENSGT00730000110905"/>
<dbReference type="HOGENOM" id="CLU_025289_1_1_1"/>
<dbReference type="InParanoid" id="Q8BTV2"/>
<dbReference type="OMA" id="YGDERCQ"/>
<dbReference type="OrthoDB" id="10065185at2759"/>
<dbReference type="PhylomeDB" id="Q8BTV2"/>
<dbReference type="TreeFam" id="TF316430"/>
<dbReference type="Reactome" id="R-MMU-72187">
    <property type="pathway name" value="mRNA 3'-end processing"/>
</dbReference>
<dbReference type="Reactome" id="R-MMU-72203">
    <property type="pathway name" value="Processing of Capped Intron-Containing Pre-mRNA"/>
</dbReference>
<dbReference type="Reactome" id="R-MMU-73856">
    <property type="pathway name" value="RNA Polymerase II Transcription Termination"/>
</dbReference>
<dbReference type="Reactome" id="R-MMU-77595">
    <property type="pathway name" value="Processing of Intronless Pre-mRNAs"/>
</dbReference>
<dbReference type="Reactome" id="R-MMU-9013422">
    <property type="pathway name" value="RHOBTB1 GTPase cycle"/>
</dbReference>
<dbReference type="BioGRID-ORCS" id="269061">
    <property type="hits" value="3 hits in 78 CRISPR screens"/>
</dbReference>
<dbReference type="ChiTaRS" id="Cpsf7">
    <property type="organism name" value="mouse"/>
</dbReference>
<dbReference type="PRO" id="PR:Q8BTV2"/>
<dbReference type="Proteomes" id="UP000000589">
    <property type="component" value="Chromosome 19"/>
</dbReference>
<dbReference type="RNAct" id="Q8BTV2">
    <property type="molecule type" value="protein"/>
</dbReference>
<dbReference type="Bgee" id="ENSMUSG00000034820">
    <property type="expression patterns" value="Expressed in retinal neural layer and 272 other cell types or tissues"/>
</dbReference>
<dbReference type="ExpressionAtlas" id="Q8BTV2">
    <property type="expression patterns" value="baseline and differential"/>
</dbReference>
<dbReference type="GO" id="GO:0005737">
    <property type="term" value="C:cytoplasm"/>
    <property type="evidence" value="ECO:0000250"/>
    <property type="project" value="UniProtKB"/>
</dbReference>
<dbReference type="GO" id="GO:0005847">
    <property type="term" value="C:mRNA cleavage and polyadenylation specificity factor complex"/>
    <property type="evidence" value="ECO:0007669"/>
    <property type="project" value="Ensembl"/>
</dbReference>
<dbReference type="GO" id="GO:0005849">
    <property type="term" value="C:mRNA cleavage factor complex"/>
    <property type="evidence" value="ECO:0000250"/>
    <property type="project" value="UniProtKB"/>
</dbReference>
<dbReference type="GO" id="GO:0005634">
    <property type="term" value="C:nucleus"/>
    <property type="evidence" value="ECO:0000250"/>
    <property type="project" value="UniProtKB"/>
</dbReference>
<dbReference type="GO" id="GO:0003723">
    <property type="term" value="F:RNA binding"/>
    <property type="evidence" value="ECO:0007669"/>
    <property type="project" value="UniProtKB-KW"/>
</dbReference>
<dbReference type="GO" id="GO:0180010">
    <property type="term" value="P:co-transcriptional mRNA 3'-end processing, cleavage and polyadenylation pathway"/>
    <property type="evidence" value="ECO:0000250"/>
    <property type="project" value="UniProtKB"/>
</dbReference>
<dbReference type="GO" id="GO:0110104">
    <property type="term" value="P:mRNA alternative polyadenylation"/>
    <property type="evidence" value="ECO:0000250"/>
    <property type="project" value="UniProtKB"/>
</dbReference>
<dbReference type="GO" id="GO:0051290">
    <property type="term" value="P:protein heterotetramerization"/>
    <property type="evidence" value="ECO:0000250"/>
    <property type="project" value="UniProtKB"/>
</dbReference>
<dbReference type="CDD" id="cd12644">
    <property type="entry name" value="RRM_CFIm59"/>
    <property type="match status" value="1"/>
</dbReference>
<dbReference type="FunFam" id="3.30.70.330:FF:000231">
    <property type="entry name" value="Cleavage and polyadenylation specificity factor subunit 7"/>
    <property type="match status" value="1"/>
</dbReference>
<dbReference type="Gene3D" id="3.30.70.330">
    <property type="match status" value="1"/>
</dbReference>
<dbReference type="InterPro" id="IPR034772">
    <property type="entry name" value="CPSF6/7"/>
</dbReference>
<dbReference type="InterPro" id="IPR034773">
    <property type="entry name" value="CPSF7_RRM"/>
</dbReference>
<dbReference type="InterPro" id="IPR012677">
    <property type="entry name" value="Nucleotide-bd_a/b_plait_sf"/>
</dbReference>
<dbReference type="InterPro" id="IPR035979">
    <property type="entry name" value="RBD_domain_sf"/>
</dbReference>
<dbReference type="InterPro" id="IPR000504">
    <property type="entry name" value="RRM_dom"/>
</dbReference>
<dbReference type="PANTHER" id="PTHR23204">
    <property type="entry name" value="CLEAVAGE AND POLYADENYLATION SPECIFIC FACTOR"/>
    <property type="match status" value="1"/>
</dbReference>
<dbReference type="Pfam" id="PF00076">
    <property type="entry name" value="RRM_1"/>
    <property type="match status" value="1"/>
</dbReference>
<dbReference type="SMART" id="SM00360">
    <property type="entry name" value="RRM"/>
    <property type="match status" value="1"/>
</dbReference>
<dbReference type="SUPFAM" id="SSF54928">
    <property type="entry name" value="RNA-binding domain, RBD"/>
    <property type="match status" value="1"/>
</dbReference>
<dbReference type="PROSITE" id="PS50102">
    <property type="entry name" value="RRM"/>
    <property type="match status" value="1"/>
</dbReference>
<protein>
    <recommendedName>
        <fullName evidence="7">Cleavage and polyadenylation specificity factor subunit 7</fullName>
    </recommendedName>
</protein>
<sequence>MSEGVDLIDIYADEEFNQDSEFNNTDQIDLYDDVLTAASQPSDDRSSSTEPPPPVRQEPAPKPNNKTPAILYTYSGLRSRRAAVYVGSFSWWTTDQQLIQVIRSIGVYDVVELKFAENRANGQSKGYAEVVVASENSVHKLLELLPGKVLNGEKVDVRPATRQNLSQFEAQARKRECVRVPRGGIPPRAHSRDSSDSADGRATPSENLVPSSARVDKPPSVLPYFNRPPSALPLMGLPPPPIPPPPPLSSSFGVPPPPPGIHYQHLMPPPPRLPPHLAVPPPGAIPPALHLNPAFFPPPNATVGPPPDTYMKASTPYNHHGSRDSGPPPSTVSEAEFEEIMKRNRAISSSAISKAVSGASAGDYSDAIETLLTAIAVIKQSRVANDERCRVLISSLKDCLHGIEAKSYSVGASGSSSRKRHRSRERSPSRSRESSRRHRDLLHNEDRHDDYFQERNREHERHRDRERDRHH</sequence>
<comment type="function">
    <text evidence="1">Component of the cleavage factor Im (CFIm) complex that functions as an activator of the pre-mRNA 3'-end cleavage and polyadenylation processing required for the maturation of pre-mRNA into functional mRNAs. CFIm contributes to the recruitment of multiprotein complexes on specific sequences on the pre-mRNA 3'-end, so called cleavage and polyadenylation signals (pA signals). Most pre-mRNAs contain multiple pA signals, resulting in alternative cleavage and polyadenylation (APA) producing mRNAs with variable 3'-end formation. The CFIm complex acts as a key regulator of cleavage and polyadenylation site choice during APA through its binding to 5'-UGUA-3' elements localized in the 3'-untranslated region (UTR) for a huge number of pre-mRNAs. CPSF7 activates directly the mRNA 3'-processing machinery. Binds to pA signals in RNA substrates.</text>
</comment>
<comment type="subunit">
    <text evidence="1">Component of the cleavage factor Im (CFIm) complex which is a heterotetramer composed of two subunits of NUDT21/CPSF5 and two subunits of CPSF6 or CPSF7 or a heterodimer of CPSF6 and CPSF7. The cleavage factor Im (CFIm) complex associates with the CPSF and CSTF complexes to promote the assembly of the core mRNA 3'-processing machinery. Interacts with NUDT21/CPSF5. Interacts (via Arg/Ser-rich domain) with FIP1L1 (preferentially via unphosphorylated form and Arg/Glu/Asp-rich region); this interaction mediates, at least in part, the interaction between the CFIm and CPSF complexes and may be inhibited by CPSF7 hyper-phosphorylation.</text>
</comment>
<comment type="subcellular location">
    <subcellularLocation>
        <location evidence="1">Nucleus</location>
    </subcellularLocation>
    <subcellularLocation>
        <location evidence="1">Cytoplasm</location>
    </subcellularLocation>
    <text evidence="1">Shuttles between the nucleus and the cytoplasm in a transcription- and XPO1/CRM1-independent manner, most probably in complex with the cleavage factor Im complex (CFIm).</text>
</comment>
<comment type="alternative products">
    <event type="alternative splicing"/>
    <isoform>
        <id>Q8BTV2-1</id>
        <name>1</name>
        <sequence type="displayed"/>
    </isoform>
    <isoform>
        <id>Q8BTV2-2</id>
        <name>2</name>
        <sequence type="described" ref="VSP_017196"/>
    </isoform>
    <isoform>
        <id>Q8BTV2-3</id>
        <name>3</name>
        <sequence type="described" ref="VSP_017195"/>
    </isoform>
</comment>
<comment type="domain">
    <text evidence="1">Contains an Arg/Ser-rich domain composed of arginine-serine dipeptide repeats within the C-terminal region that is necessary and sufficient for activating mRNA 3'-processing.</text>
</comment>
<comment type="PTM">
    <text evidence="1">Phosphorylated.</text>
</comment>
<comment type="PTM">
    <text evidence="1">Asymmetrically dimethylated on arginine residues by PRMT1.</text>
</comment>
<comment type="similarity">
    <text evidence="6">Belongs to the RRM CPSF6/7 family.</text>
</comment>
<gene>
    <name evidence="7" type="primary">Cpsf7</name>
</gene>
<proteinExistence type="evidence at protein level"/>
<evidence type="ECO:0000250" key="1">
    <source>
        <dbReference type="UniProtKB" id="Q8N684"/>
    </source>
</evidence>
<evidence type="ECO:0000255" key="2">
    <source>
        <dbReference type="PROSITE-ProRule" id="PRU00176"/>
    </source>
</evidence>
<evidence type="ECO:0000256" key="3">
    <source>
        <dbReference type="SAM" id="MobiDB-lite"/>
    </source>
</evidence>
<evidence type="ECO:0000303" key="4">
    <source>
    </source>
</evidence>
<evidence type="ECO:0000303" key="5">
    <source>
    </source>
</evidence>
<evidence type="ECO:0000305" key="6"/>
<evidence type="ECO:0000312" key="7">
    <source>
        <dbReference type="MGI" id="MGI:1917826"/>
    </source>
</evidence>
<evidence type="ECO:0007744" key="8">
    <source>
    </source>
</evidence>
<evidence type="ECO:0007744" key="9">
    <source>
    </source>
</evidence>
<evidence type="ECO:0007744" key="10">
    <source>
    </source>
</evidence>
<accession>Q8BTV2</accession>
<accession>Q3TNF1</accession>
<accession>Q8BKE7</accession>
<accession>Q8CFS8</accession>
<reference key="1">
    <citation type="journal article" date="2005" name="Science">
        <title>The transcriptional landscape of the mammalian genome.</title>
        <authorList>
            <person name="Carninci P."/>
            <person name="Kasukawa T."/>
            <person name="Katayama S."/>
            <person name="Gough J."/>
            <person name="Frith M.C."/>
            <person name="Maeda N."/>
            <person name="Oyama R."/>
            <person name="Ravasi T."/>
            <person name="Lenhard B."/>
            <person name="Wells C."/>
            <person name="Kodzius R."/>
            <person name="Shimokawa K."/>
            <person name="Bajic V.B."/>
            <person name="Brenner S.E."/>
            <person name="Batalov S."/>
            <person name="Forrest A.R."/>
            <person name="Zavolan M."/>
            <person name="Davis M.J."/>
            <person name="Wilming L.G."/>
            <person name="Aidinis V."/>
            <person name="Allen J.E."/>
            <person name="Ambesi-Impiombato A."/>
            <person name="Apweiler R."/>
            <person name="Aturaliya R.N."/>
            <person name="Bailey T.L."/>
            <person name="Bansal M."/>
            <person name="Baxter L."/>
            <person name="Beisel K.W."/>
            <person name="Bersano T."/>
            <person name="Bono H."/>
            <person name="Chalk A.M."/>
            <person name="Chiu K.P."/>
            <person name="Choudhary V."/>
            <person name="Christoffels A."/>
            <person name="Clutterbuck D.R."/>
            <person name="Crowe M.L."/>
            <person name="Dalla E."/>
            <person name="Dalrymple B.P."/>
            <person name="de Bono B."/>
            <person name="Della Gatta G."/>
            <person name="di Bernardo D."/>
            <person name="Down T."/>
            <person name="Engstrom P."/>
            <person name="Fagiolini M."/>
            <person name="Faulkner G."/>
            <person name="Fletcher C.F."/>
            <person name="Fukushima T."/>
            <person name="Furuno M."/>
            <person name="Futaki S."/>
            <person name="Gariboldi M."/>
            <person name="Georgii-Hemming P."/>
            <person name="Gingeras T.R."/>
            <person name="Gojobori T."/>
            <person name="Green R.E."/>
            <person name="Gustincich S."/>
            <person name="Harbers M."/>
            <person name="Hayashi Y."/>
            <person name="Hensch T.K."/>
            <person name="Hirokawa N."/>
            <person name="Hill D."/>
            <person name="Huminiecki L."/>
            <person name="Iacono M."/>
            <person name="Ikeo K."/>
            <person name="Iwama A."/>
            <person name="Ishikawa T."/>
            <person name="Jakt M."/>
            <person name="Kanapin A."/>
            <person name="Katoh M."/>
            <person name="Kawasawa Y."/>
            <person name="Kelso J."/>
            <person name="Kitamura H."/>
            <person name="Kitano H."/>
            <person name="Kollias G."/>
            <person name="Krishnan S.P."/>
            <person name="Kruger A."/>
            <person name="Kummerfeld S.K."/>
            <person name="Kurochkin I.V."/>
            <person name="Lareau L.F."/>
            <person name="Lazarevic D."/>
            <person name="Lipovich L."/>
            <person name="Liu J."/>
            <person name="Liuni S."/>
            <person name="McWilliam S."/>
            <person name="Madan Babu M."/>
            <person name="Madera M."/>
            <person name="Marchionni L."/>
            <person name="Matsuda H."/>
            <person name="Matsuzawa S."/>
            <person name="Miki H."/>
            <person name="Mignone F."/>
            <person name="Miyake S."/>
            <person name="Morris K."/>
            <person name="Mottagui-Tabar S."/>
            <person name="Mulder N."/>
            <person name="Nakano N."/>
            <person name="Nakauchi H."/>
            <person name="Ng P."/>
            <person name="Nilsson R."/>
            <person name="Nishiguchi S."/>
            <person name="Nishikawa S."/>
            <person name="Nori F."/>
            <person name="Ohara O."/>
            <person name="Okazaki Y."/>
            <person name="Orlando V."/>
            <person name="Pang K.C."/>
            <person name="Pavan W.J."/>
            <person name="Pavesi G."/>
            <person name="Pesole G."/>
            <person name="Petrovsky N."/>
            <person name="Piazza S."/>
            <person name="Reed J."/>
            <person name="Reid J.F."/>
            <person name="Ring B.Z."/>
            <person name="Ringwald M."/>
            <person name="Rost B."/>
            <person name="Ruan Y."/>
            <person name="Salzberg S.L."/>
            <person name="Sandelin A."/>
            <person name="Schneider C."/>
            <person name="Schoenbach C."/>
            <person name="Sekiguchi K."/>
            <person name="Semple C.A."/>
            <person name="Seno S."/>
            <person name="Sessa L."/>
            <person name="Sheng Y."/>
            <person name="Shibata Y."/>
            <person name="Shimada H."/>
            <person name="Shimada K."/>
            <person name="Silva D."/>
            <person name="Sinclair B."/>
            <person name="Sperling S."/>
            <person name="Stupka E."/>
            <person name="Sugiura K."/>
            <person name="Sultana R."/>
            <person name="Takenaka Y."/>
            <person name="Taki K."/>
            <person name="Tammoja K."/>
            <person name="Tan S.L."/>
            <person name="Tang S."/>
            <person name="Taylor M.S."/>
            <person name="Tegner J."/>
            <person name="Teichmann S.A."/>
            <person name="Ueda H.R."/>
            <person name="van Nimwegen E."/>
            <person name="Verardo R."/>
            <person name="Wei C.L."/>
            <person name="Yagi K."/>
            <person name="Yamanishi H."/>
            <person name="Zabarovsky E."/>
            <person name="Zhu S."/>
            <person name="Zimmer A."/>
            <person name="Hide W."/>
            <person name="Bult C."/>
            <person name="Grimmond S.M."/>
            <person name="Teasdale R.D."/>
            <person name="Liu E.T."/>
            <person name="Brusic V."/>
            <person name="Quackenbush J."/>
            <person name="Wahlestedt C."/>
            <person name="Mattick J.S."/>
            <person name="Hume D.A."/>
            <person name="Kai C."/>
            <person name="Sasaki D."/>
            <person name="Tomaru Y."/>
            <person name="Fukuda S."/>
            <person name="Kanamori-Katayama M."/>
            <person name="Suzuki M."/>
            <person name="Aoki J."/>
            <person name="Arakawa T."/>
            <person name="Iida J."/>
            <person name="Imamura K."/>
            <person name="Itoh M."/>
            <person name="Kato T."/>
            <person name="Kawaji H."/>
            <person name="Kawagashira N."/>
            <person name="Kawashima T."/>
            <person name="Kojima M."/>
            <person name="Kondo S."/>
            <person name="Konno H."/>
            <person name="Nakano K."/>
            <person name="Ninomiya N."/>
            <person name="Nishio T."/>
            <person name="Okada M."/>
            <person name="Plessy C."/>
            <person name="Shibata K."/>
            <person name="Shiraki T."/>
            <person name="Suzuki S."/>
            <person name="Tagami M."/>
            <person name="Waki K."/>
            <person name="Watahiki A."/>
            <person name="Okamura-Oho Y."/>
            <person name="Suzuki H."/>
            <person name="Kawai J."/>
            <person name="Hayashizaki Y."/>
        </authorList>
    </citation>
    <scope>NUCLEOTIDE SEQUENCE [LARGE SCALE MRNA] (ISOFORMS 1 AND 3)</scope>
    <source>
        <strain>C57BL/6J</strain>
        <strain>NOD</strain>
        <tissue>Eye</tissue>
        <tissue>Spleen</tissue>
        <tissue>Thymus</tissue>
    </source>
</reference>
<reference key="2">
    <citation type="journal article" date="2004" name="Genome Res.">
        <title>The status, quality, and expansion of the NIH full-length cDNA project: the Mammalian Gene Collection (MGC).</title>
        <authorList>
            <consortium name="The MGC Project Team"/>
        </authorList>
    </citation>
    <scope>NUCLEOTIDE SEQUENCE [LARGE SCALE MRNA] (ISOFORM 2)</scope>
    <source>
        <tissue>Eye</tissue>
    </source>
</reference>
<reference key="3">
    <citation type="journal article" date="2007" name="Proc. Natl. Acad. Sci. U.S.A.">
        <title>Large-scale phosphorylation analysis of mouse liver.</title>
        <authorList>
            <person name="Villen J."/>
            <person name="Beausoleil S.A."/>
            <person name="Gerber S.A."/>
            <person name="Gygi S.P."/>
        </authorList>
    </citation>
    <scope>PHOSPHORYLATION [LARGE SCALE ANALYSIS] AT THR-203</scope>
    <scope>IDENTIFICATION BY MASS SPECTROMETRY [LARGE SCALE ANALYSIS]</scope>
    <source>
        <tissue>Liver</tissue>
    </source>
</reference>
<reference key="4">
    <citation type="journal article" date="2009" name="Mol. Cell. Proteomics">
        <title>Large scale localization of protein phosphorylation by use of electron capture dissociation mass spectrometry.</title>
        <authorList>
            <person name="Sweet S.M."/>
            <person name="Bailey C.M."/>
            <person name="Cunningham D.L."/>
            <person name="Heath J.K."/>
            <person name="Cooper H.J."/>
        </authorList>
    </citation>
    <scope>PHOSPHORYLATION [LARGE SCALE ANALYSIS] AT THR-203</scope>
    <scope>IDENTIFICATION BY MASS SPECTROMETRY [LARGE SCALE ANALYSIS]</scope>
    <source>
        <tissue>Embryonic fibroblast</tissue>
    </source>
</reference>
<reference key="5">
    <citation type="journal article" date="2010" name="Cell">
        <title>A tissue-specific atlas of mouse protein phosphorylation and expression.</title>
        <authorList>
            <person name="Huttlin E.L."/>
            <person name="Jedrychowski M.P."/>
            <person name="Elias J.E."/>
            <person name="Goswami T."/>
            <person name="Rad R."/>
            <person name="Beausoleil S.A."/>
            <person name="Villen J."/>
            <person name="Haas W."/>
            <person name="Sowa M.E."/>
            <person name="Gygi S.P."/>
        </authorList>
    </citation>
    <scope>PHOSPHORYLATION [LARGE SCALE ANALYSIS] AT THR-203 AND SER-205</scope>
    <scope>IDENTIFICATION BY MASS SPECTROMETRY [LARGE SCALE ANALYSIS]</scope>
    <source>
        <tissue>Brain</tissue>
        <tissue>Heart</tissue>
        <tissue>Kidney</tissue>
        <tissue>Lung</tissue>
        <tissue>Spleen</tissue>
    </source>
</reference>
<feature type="chain" id="PRO_0000081528" description="Cleavage and polyadenylation specificity factor subunit 7">
    <location>
        <begin position="1"/>
        <end position="471"/>
    </location>
</feature>
<feature type="domain" description="RRM" evidence="2">
    <location>
        <begin position="82"/>
        <end position="162"/>
    </location>
</feature>
<feature type="region of interest" description="Disordered" evidence="3">
    <location>
        <begin position="34"/>
        <end position="68"/>
    </location>
</feature>
<feature type="region of interest" description="Disordered" evidence="3">
    <location>
        <begin position="176"/>
        <end position="220"/>
    </location>
</feature>
<feature type="region of interest" description="Disordered" evidence="3">
    <location>
        <begin position="409"/>
        <end position="471"/>
    </location>
</feature>
<feature type="region of interest" description="Arg/Ser-rich domain" evidence="1">
    <location>
        <begin position="418"/>
        <end position="469"/>
    </location>
</feature>
<feature type="compositionally biased region" description="Pro residues" evidence="3">
    <location>
        <begin position="50"/>
        <end position="62"/>
    </location>
</feature>
<feature type="compositionally biased region" description="Basic and acidic residues" evidence="3">
    <location>
        <begin position="190"/>
        <end position="199"/>
    </location>
</feature>
<feature type="compositionally biased region" description="Basic and acidic residues" evidence="3">
    <location>
        <begin position="425"/>
        <end position="434"/>
    </location>
</feature>
<feature type="compositionally biased region" description="Basic and acidic residues" evidence="3">
    <location>
        <begin position="441"/>
        <end position="471"/>
    </location>
</feature>
<feature type="modified residue" description="Phosphothreonine" evidence="8 9 10">
    <location>
        <position position="203"/>
    </location>
</feature>
<feature type="modified residue" description="Phosphoserine" evidence="10">
    <location>
        <position position="205"/>
    </location>
</feature>
<feature type="modified residue" description="Phosphoserine" evidence="1">
    <location>
        <position position="413"/>
    </location>
</feature>
<feature type="modified residue" description="Phosphoserine" evidence="1">
    <location>
        <position position="423"/>
    </location>
</feature>
<feature type="cross-link" description="Glycyl lysine isopeptide (Lys-Gly) (interchain with G-Cter in SUMO2)" evidence="1">
    <location>
        <position position="354"/>
    </location>
</feature>
<feature type="splice variant" id="VSP_017195" description="In isoform 3." evidence="5">
    <location>
        <begin position="1"/>
        <end position="234"/>
    </location>
</feature>
<feature type="splice variant" id="VSP_017196" description="In isoform 2." evidence="4">
    <location>
        <begin position="176"/>
        <end position="184"/>
    </location>
</feature>
<feature type="sequence conflict" description="In Ref. 1; BAC40447." evidence="6" ref="1">
    <original>H</original>
    <variation>Q</variation>
    <location>
        <position position="262"/>
    </location>
</feature>
<keyword id="KW-0025">Alternative splicing</keyword>
<keyword id="KW-0963">Cytoplasm</keyword>
<keyword id="KW-1017">Isopeptide bond</keyword>
<keyword id="KW-0507">mRNA processing</keyword>
<keyword id="KW-0539">Nucleus</keyword>
<keyword id="KW-0597">Phosphoprotein</keyword>
<keyword id="KW-1185">Reference proteome</keyword>
<keyword id="KW-0694">RNA-binding</keyword>
<keyword id="KW-0832">Ubl conjugation</keyword>